<name>KDPA_MYCBO</name>
<sequence length="571" mass="60163">MSGTSWLQFAALIAVLLLTAPALGGYLAKIYGDEAKKPGDRVFGPIERVIYQVCRVDPGSEQRWSTYALSVLAFSVMSFLLLYGIARFQGVLPFNPTDKPAVTDHVAFNAAVSFMTNTNWQSYSGEATMSHFTQMTGLAVQNFVSASAGMCVLAALIRGLARKRASTLGNFWVDLARTVLRIMFPLSFVVAILLVSQGVIQNLHGFIVANTLEGAPQLIPGGPVASQVAIKQLGTNGGGFFNVNSAHPFENYTPIGNFVENWAILIIPFALCFAFGKMVHDRRQGWAVLAIMGIIWIGMSVAAMSFEAKGNPRLDALGVTQQTTVDQSGGNLEGKEVRFGVGASGLWAASTTGTSNGSVNSMHDSYTPLGGMVPLAHMMLGEVSPGGTGVGLNGLLVMAILAVFIAGLMVGRTPEYLGKKIQATEMKLVTLYILAMPIALLSFAAASVLISSALASRNNPGPHGLSEILYAYTSGANNNGSAFAGLTASTWSYDTTIGVAMLIGRFFLIIPVLAIAGSLARKGTTPVTAATFPTHKPLFVGLVIGVVLIVGGLTFFPALALGPIVEQLSTQ</sequence>
<keyword id="KW-1003">Cell membrane</keyword>
<keyword id="KW-0406">Ion transport</keyword>
<keyword id="KW-0472">Membrane</keyword>
<keyword id="KW-0630">Potassium</keyword>
<keyword id="KW-0633">Potassium transport</keyword>
<keyword id="KW-1185">Reference proteome</keyword>
<keyword id="KW-0812">Transmembrane</keyword>
<keyword id="KW-1133">Transmembrane helix</keyword>
<keyword id="KW-0813">Transport</keyword>
<reference key="1">
    <citation type="journal article" date="2003" name="Proc. Natl. Acad. Sci. U.S.A.">
        <title>The complete genome sequence of Mycobacterium bovis.</title>
        <authorList>
            <person name="Garnier T."/>
            <person name="Eiglmeier K."/>
            <person name="Camus J.-C."/>
            <person name="Medina N."/>
            <person name="Mansoor H."/>
            <person name="Pryor M."/>
            <person name="Duthoy S."/>
            <person name="Grondin S."/>
            <person name="Lacroix C."/>
            <person name="Monsempe C."/>
            <person name="Simon S."/>
            <person name="Harris B."/>
            <person name="Atkin R."/>
            <person name="Doggett J."/>
            <person name="Mayes R."/>
            <person name="Keating L."/>
            <person name="Wheeler P.R."/>
            <person name="Parkhill J."/>
            <person name="Barrell B.G."/>
            <person name="Cole S.T."/>
            <person name="Gordon S.V."/>
            <person name="Hewinson R.G."/>
        </authorList>
    </citation>
    <scope>NUCLEOTIDE SEQUENCE [LARGE SCALE GENOMIC DNA]</scope>
    <source>
        <strain>ATCC BAA-935 / AF2122/97</strain>
    </source>
</reference>
<reference key="2">
    <citation type="journal article" date="2017" name="Genome Announc.">
        <title>Updated reference genome sequence and annotation of Mycobacterium bovis AF2122/97.</title>
        <authorList>
            <person name="Malone K.M."/>
            <person name="Farrell D."/>
            <person name="Stuber T.P."/>
            <person name="Schubert O.T."/>
            <person name="Aebersold R."/>
            <person name="Robbe-Austerman S."/>
            <person name="Gordon S.V."/>
        </authorList>
    </citation>
    <scope>NUCLEOTIDE SEQUENCE [LARGE SCALE GENOMIC DNA]</scope>
    <scope>GENOME REANNOTATION</scope>
    <source>
        <strain>ATCC BAA-935 / AF2122/97</strain>
    </source>
</reference>
<gene>
    <name evidence="1" type="primary">kdpA</name>
    <name type="ordered locus">BQ2027_MB1058</name>
</gene>
<proteinExistence type="inferred from homology"/>
<protein>
    <recommendedName>
        <fullName evidence="1">Potassium-transporting ATPase potassium-binding subunit</fullName>
    </recommendedName>
    <alternativeName>
        <fullName evidence="1">ATP phosphohydrolase [potassium-transporting] A chain</fullName>
    </alternativeName>
    <alternativeName>
        <fullName evidence="1">Potassium-binding and translocating subunit A</fullName>
    </alternativeName>
    <alternativeName>
        <fullName evidence="1">Potassium-translocating ATPase A chain</fullName>
    </alternativeName>
</protein>
<dbReference type="EMBL" id="LT708304">
    <property type="protein sequence ID" value="SIT99657.1"/>
    <property type="molecule type" value="Genomic_DNA"/>
</dbReference>
<dbReference type="RefSeq" id="NP_854714.1">
    <property type="nucleotide sequence ID" value="NC_002945.3"/>
</dbReference>
<dbReference type="RefSeq" id="WP_003405318.1">
    <property type="nucleotide sequence ID" value="NC_002945.4"/>
</dbReference>
<dbReference type="SMR" id="P65210"/>
<dbReference type="KEGG" id="mbo:BQ2027_MB1058"/>
<dbReference type="PATRIC" id="fig|233413.5.peg.1151"/>
<dbReference type="Proteomes" id="UP000001419">
    <property type="component" value="Chromosome"/>
</dbReference>
<dbReference type="GO" id="GO:0005886">
    <property type="term" value="C:plasma membrane"/>
    <property type="evidence" value="ECO:0007669"/>
    <property type="project" value="UniProtKB-SubCell"/>
</dbReference>
<dbReference type="GO" id="GO:0008556">
    <property type="term" value="F:P-type potassium transmembrane transporter activity"/>
    <property type="evidence" value="ECO:0007669"/>
    <property type="project" value="InterPro"/>
</dbReference>
<dbReference type="GO" id="GO:0030955">
    <property type="term" value="F:potassium ion binding"/>
    <property type="evidence" value="ECO:0007669"/>
    <property type="project" value="UniProtKB-UniRule"/>
</dbReference>
<dbReference type="HAMAP" id="MF_00275">
    <property type="entry name" value="KdpA"/>
    <property type="match status" value="1"/>
</dbReference>
<dbReference type="InterPro" id="IPR004623">
    <property type="entry name" value="KdpA"/>
</dbReference>
<dbReference type="NCBIfam" id="TIGR00680">
    <property type="entry name" value="kdpA"/>
    <property type="match status" value="1"/>
</dbReference>
<dbReference type="PANTHER" id="PTHR30607">
    <property type="entry name" value="POTASSIUM-TRANSPORTING ATPASE A CHAIN"/>
    <property type="match status" value="1"/>
</dbReference>
<dbReference type="PANTHER" id="PTHR30607:SF2">
    <property type="entry name" value="POTASSIUM-TRANSPORTING ATPASE POTASSIUM-BINDING SUBUNIT"/>
    <property type="match status" value="1"/>
</dbReference>
<dbReference type="Pfam" id="PF03814">
    <property type="entry name" value="KdpA"/>
    <property type="match status" value="1"/>
</dbReference>
<dbReference type="PIRSF" id="PIRSF001294">
    <property type="entry name" value="K_ATPaseA"/>
    <property type="match status" value="1"/>
</dbReference>
<accession>P65210</accession>
<accession>A0A1R3XX56</accession>
<accession>P96371</accession>
<accession>X2BGR6</accession>
<organism>
    <name type="scientific">Mycobacterium bovis (strain ATCC BAA-935 / AF2122/97)</name>
    <dbReference type="NCBI Taxonomy" id="233413"/>
    <lineage>
        <taxon>Bacteria</taxon>
        <taxon>Bacillati</taxon>
        <taxon>Actinomycetota</taxon>
        <taxon>Actinomycetes</taxon>
        <taxon>Mycobacteriales</taxon>
        <taxon>Mycobacteriaceae</taxon>
        <taxon>Mycobacterium</taxon>
        <taxon>Mycobacterium tuberculosis complex</taxon>
    </lineage>
</organism>
<evidence type="ECO:0000255" key="1">
    <source>
        <dbReference type="HAMAP-Rule" id="MF_00275"/>
    </source>
</evidence>
<comment type="function">
    <text evidence="1">Part of the high-affinity ATP-driven potassium transport (or Kdp) system, which catalyzes the hydrolysis of ATP coupled with the electrogenic transport of potassium into the cytoplasm. This subunit binds the extracellular potassium ions and delivers the ions to the membrane domain of KdpB through an intramembrane tunnel.</text>
</comment>
<comment type="subunit">
    <text evidence="1">The system is composed of three essential subunits: KdpA, KdpB and KdpC.</text>
</comment>
<comment type="subcellular location">
    <subcellularLocation>
        <location evidence="1">Cell membrane</location>
        <topology evidence="1">Multi-pass membrane protein</topology>
    </subcellularLocation>
</comment>
<comment type="similarity">
    <text evidence="1">Belongs to the KdpA family.</text>
</comment>
<feature type="chain" id="PRO_0000166507" description="Potassium-transporting ATPase potassium-binding subunit">
    <location>
        <begin position="1"/>
        <end position="571"/>
    </location>
</feature>
<feature type="transmembrane region" description="Helical" evidence="1">
    <location>
        <begin position="7"/>
        <end position="27"/>
    </location>
</feature>
<feature type="transmembrane region" description="Helical" evidence="1">
    <location>
        <begin position="66"/>
        <end position="86"/>
    </location>
</feature>
<feature type="transmembrane region" description="Helical" evidence="1">
    <location>
        <begin position="137"/>
        <end position="157"/>
    </location>
</feature>
<feature type="transmembrane region" description="Helical" evidence="1">
    <location>
        <begin position="188"/>
        <end position="208"/>
    </location>
</feature>
<feature type="transmembrane region" description="Helical" evidence="1">
    <location>
        <begin position="255"/>
        <end position="275"/>
    </location>
</feature>
<feature type="transmembrane region" description="Helical" evidence="1">
    <location>
        <begin position="286"/>
        <end position="306"/>
    </location>
</feature>
<feature type="transmembrane region" description="Helical" evidence="1">
    <location>
        <begin position="390"/>
        <end position="410"/>
    </location>
</feature>
<feature type="transmembrane region" description="Helical" evidence="1">
    <location>
        <begin position="430"/>
        <end position="450"/>
    </location>
</feature>
<feature type="transmembrane region" description="Helical" evidence="1">
    <location>
        <begin position="497"/>
        <end position="517"/>
    </location>
</feature>
<feature type="transmembrane region" description="Helical" evidence="1">
    <location>
        <begin position="538"/>
        <end position="558"/>
    </location>
</feature>